<organism>
    <name type="scientific">Danio rerio</name>
    <name type="common">Zebrafish</name>
    <name type="synonym">Brachydanio rerio</name>
    <dbReference type="NCBI Taxonomy" id="7955"/>
    <lineage>
        <taxon>Eukaryota</taxon>
        <taxon>Metazoa</taxon>
        <taxon>Chordata</taxon>
        <taxon>Craniata</taxon>
        <taxon>Vertebrata</taxon>
        <taxon>Euteleostomi</taxon>
        <taxon>Actinopterygii</taxon>
        <taxon>Neopterygii</taxon>
        <taxon>Teleostei</taxon>
        <taxon>Ostariophysi</taxon>
        <taxon>Cypriniformes</taxon>
        <taxon>Danionidae</taxon>
        <taxon>Danioninae</taxon>
        <taxon>Danio</taxon>
    </lineage>
</organism>
<dbReference type="EMBL" id="CT033837">
    <property type="status" value="NOT_ANNOTATED_CDS"/>
    <property type="molecule type" value="Genomic_DNA"/>
</dbReference>
<dbReference type="EMBL" id="BC072712">
    <property type="protein sequence ID" value="AAH72712.1"/>
    <property type="molecule type" value="mRNA"/>
</dbReference>
<dbReference type="RefSeq" id="NP_001002194.1">
    <property type="nucleotide sequence ID" value="NM_001002194.1"/>
</dbReference>
<dbReference type="SMR" id="Q6GQN0"/>
<dbReference type="FunCoup" id="Q6GQN0">
    <property type="interactions" value="394"/>
</dbReference>
<dbReference type="STRING" id="7955.ENSDARP00000056179"/>
<dbReference type="PaxDb" id="7955-ENSDARP00000056179"/>
<dbReference type="Ensembl" id="ENSDART00000056180">
    <property type="protein sequence ID" value="ENSDARP00000056179"/>
    <property type="gene ID" value="ENSDARG00000038500"/>
</dbReference>
<dbReference type="Ensembl" id="ENSDART00000178154">
    <property type="protein sequence ID" value="ENSDARP00000144297"/>
    <property type="gene ID" value="ENSDARG00000117114"/>
</dbReference>
<dbReference type="GeneID" id="431741"/>
<dbReference type="KEGG" id="dre:431741"/>
<dbReference type="AGR" id="ZFIN:ZDB-GENE-040704-35"/>
<dbReference type="CTD" id="95681"/>
<dbReference type="ZFIN" id="ZDB-GENE-040704-35">
    <property type="gene designation" value="cep41"/>
</dbReference>
<dbReference type="eggNOG" id="ENOG502QR8A">
    <property type="taxonomic scope" value="Eukaryota"/>
</dbReference>
<dbReference type="HOGENOM" id="CLU_064316_0_0_1"/>
<dbReference type="InParanoid" id="Q6GQN0"/>
<dbReference type="OMA" id="TMCQRGF"/>
<dbReference type="OrthoDB" id="70250at2759"/>
<dbReference type="PhylomeDB" id="Q6GQN0"/>
<dbReference type="TreeFam" id="TF324682"/>
<dbReference type="PRO" id="PR:Q6GQN0"/>
<dbReference type="Proteomes" id="UP000000437">
    <property type="component" value="Alternate scaffold 25"/>
</dbReference>
<dbReference type="Proteomes" id="UP000000437">
    <property type="component" value="Chromosome 25"/>
</dbReference>
<dbReference type="Bgee" id="ENSDARG00000038500">
    <property type="expression patterns" value="Expressed in testis and 20 other cell types or tissues"/>
</dbReference>
<dbReference type="GO" id="GO:0005814">
    <property type="term" value="C:centriole"/>
    <property type="evidence" value="ECO:0000250"/>
    <property type="project" value="UniProtKB"/>
</dbReference>
<dbReference type="GO" id="GO:0005813">
    <property type="term" value="C:centrosome"/>
    <property type="evidence" value="ECO:0007669"/>
    <property type="project" value="UniProtKB-SubCell"/>
</dbReference>
<dbReference type="GO" id="GO:0036064">
    <property type="term" value="C:ciliary basal body"/>
    <property type="evidence" value="ECO:0000250"/>
    <property type="project" value="UniProtKB"/>
</dbReference>
<dbReference type="GO" id="GO:0005929">
    <property type="term" value="C:cilium"/>
    <property type="evidence" value="ECO:0000250"/>
    <property type="project" value="UniProtKB"/>
</dbReference>
<dbReference type="GO" id="GO:0005737">
    <property type="term" value="C:cytoplasm"/>
    <property type="evidence" value="ECO:0007669"/>
    <property type="project" value="UniProtKB-KW"/>
</dbReference>
<dbReference type="GO" id="GO:0070740">
    <property type="term" value="F:tubulin-glutamic acid ligase activity"/>
    <property type="evidence" value="ECO:0000315"/>
    <property type="project" value="ZFIN"/>
</dbReference>
<dbReference type="GO" id="GO:0001525">
    <property type="term" value="P:angiogenesis"/>
    <property type="evidence" value="ECO:0000315"/>
    <property type="project" value="ZFIN"/>
</dbReference>
<dbReference type="GO" id="GO:0035082">
    <property type="term" value="P:axoneme assembly"/>
    <property type="evidence" value="ECO:0000315"/>
    <property type="project" value="ZFIN"/>
</dbReference>
<dbReference type="GO" id="GO:0060271">
    <property type="term" value="P:cilium assembly"/>
    <property type="evidence" value="ECO:0000315"/>
    <property type="project" value="UniProtKB"/>
</dbReference>
<dbReference type="GO" id="GO:0001755">
    <property type="term" value="P:neural crest cell migration"/>
    <property type="evidence" value="ECO:0000315"/>
    <property type="project" value="ZFIN"/>
</dbReference>
<dbReference type="GO" id="GO:0018095">
    <property type="term" value="P:protein polyglutamylation"/>
    <property type="evidence" value="ECO:0000315"/>
    <property type="project" value="UniProtKB"/>
</dbReference>
<dbReference type="GO" id="GO:0015031">
    <property type="term" value="P:protein transport"/>
    <property type="evidence" value="ECO:0007669"/>
    <property type="project" value="UniProtKB-KW"/>
</dbReference>
<dbReference type="CDD" id="cd00158">
    <property type="entry name" value="RHOD"/>
    <property type="match status" value="1"/>
</dbReference>
<dbReference type="FunFam" id="3.40.250.10:FF:000012">
    <property type="entry name" value="Centrosomal protein of 41 kDa"/>
    <property type="match status" value="1"/>
</dbReference>
<dbReference type="Gene3D" id="3.40.250.10">
    <property type="entry name" value="Rhodanese-like domain"/>
    <property type="match status" value="1"/>
</dbReference>
<dbReference type="InterPro" id="IPR051889">
    <property type="entry name" value="CEP41"/>
</dbReference>
<dbReference type="InterPro" id="IPR001763">
    <property type="entry name" value="Rhodanese-like_dom"/>
</dbReference>
<dbReference type="InterPro" id="IPR036873">
    <property type="entry name" value="Rhodanese-like_dom_sf"/>
</dbReference>
<dbReference type="PANTHER" id="PTHR44390">
    <property type="entry name" value="CENTROSOMAL PROTEIN OF 41 KDA"/>
    <property type="match status" value="1"/>
</dbReference>
<dbReference type="PANTHER" id="PTHR44390:SF1">
    <property type="entry name" value="CENTROSOMAL PROTEIN OF 41 KDA"/>
    <property type="match status" value="1"/>
</dbReference>
<dbReference type="Pfam" id="PF00581">
    <property type="entry name" value="Rhodanese"/>
    <property type="match status" value="1"/>
</dbReference>
<dbReference type="SMART" id="SM00450">
    <property type="entry name" value="RHOD"/>
    <property type="match status" value="1"/>
</dbReference>
<dbReference type="SUPFAM" id="SSF52821">
    <property type="entry name" value="Rhodanese/Cell cycle control phosphatase"/>
    <property type="match status" value="1"/>
</dbReference>
<dbReference type="PROSITE" id="PS50206">
    <property type="entry name" value="RHODANESE_3"/>
    <property type="match status" value="1"/>
</dbReference>
<accession>Q6GQN0</accession>
<comment type="function">
    <text evidence="4">Required during ciliogenesis for tubulin glutamylation in cilium. Probably acts by participating in the transport of tubulin polyglutamylases between the basal body and the cilium.</text>
</comment>
<comment type="subcellular location">
    <subcellularLocation>
        <location evidence="1">Cytoplasm</location>
        <location evidence="1">Cytoskeleton</location>
        <location evidence="1">Microtubule organizing center</location>
        <location evidence="1">Centrosome</location>
    </subcellularLocation>
    <subcellularLocation>
        <location evidence="1">Cell projection</location>
        <location evidence="1">Cilium</location>
    </subcellularLocation>
    <subcellularLocation>
        <location evidence="1">Cytoplasm</location>
        <location evidence="1">Cytoskeleton</location>
        <location evidence="1">Cilium basal body</location>
    </subcellularLocation>
    <text evidence="1">Localizes mainly to the cilium basal body and in primary cilia.</text>
</comment>
<comment type="tissue specificity">
    <text evidence="4">Expressed in various ciliary organs, including Kupffer's vesicle, ear and heart, as well as brain and kidney.</text>
</comment>
<comment type="disruption phenotype">
    <text evidence="4">Embryos display peripheral heart edema and tail defects along with ciliopathy-related phenotypes, including hydrocephalus, abnormal ear otolith formation and smaller eyes.</text>
</comment>
<comment type="similarity">
    <text evidence="5">Belongs to the CEP41 family.</text>
</comment>
<sequence>MSVKRGIGDSAFLKKKIPQNPKYQHVKTRLDTGSSLTKYMERLEEARKNYRYRKDELFKRLKVTTFAQLVIQVASVSDQNDNIKDEMAGLEDDVSIFSASPGLDCLSDQTNGSPQPNLPPPQTINIDESGDNGFSPRSTLQSVISGVGELDLDKNGQKTIRLSPVSTSNTTECPYPDCPYLLLDVRDRELYDQCHIVSAYSYPIATLSRTMNPYTKEVLDYKNASGKIIIVYDEDERIASQAATTMCERGFENLFMLSGGLKVVAQKFPEGMTTGSVPISCLPSPTGPAGRKRSAQHQTSQLAEKKWRFTAEDLDKIQHYLEEVFIPSETSSRLSSRMSTSSARSKASTVGSSRQGSSIAGSESARSRSSRPWK</sequence>
<keyword id="KW-0966">Cell projection</keyword>
<keyword id="KW-1186">Ciliopathy</keyword>
<keyword id="KW-0969">Cilium</keyword>
<keyword id="KW-0970">Cilium biogenesis/degradation</keyword>
<keyword id="KW-0963">Cytoplasm</keyword>
<keyword id="KW-0206">Cytoskeleton</keyword>
<keyword id="KW-0653">Protein transport</keyword>
<keyword id="KW-1185">Reference proteome</keyword>
<keyword id="KW-0813">Transport</keyword>
<proteinExistence type="evidence at transcript level"/>
<evidence type="ECO:0000250" key="1"/>
<evidence type="ECO:0000255" key="2">
    <source>
        <dbReference type="PROSITE-ProRule" id="PRU00173"/>
    </source>
</evidence>
<evidence type="ECO:0000256" key="3">
    <source>
        <dbReference type="SAM" id="MobiDB-lite"/>
    </source>
</evidence>
<evidence type="ECO:0000269" key="4">
    <source>
    </source>
</evidence>
<evidence type="ECO:0000305" key="5"/>
<reference key="1">
    <citation type="journal article" date="2013" name="Nature">
        <title>The zebrafish reference genome sequence and its relationship to the human genome.</title>
        <authorList>
            <person name="Howe K."/>
            <person name="Clark M.D."/>
            <person name="Torroja C.F."/>
            <person name="Torrance J."/>
            <person name="Berthelot C."/>
            <person name="Muffato M."/>
            <person name="Collins J.E."/>
            <person name="Humphray S."/>
            <person name="McLaren K."/>
            <person name="Matthews L."/>
            <person name="McLaren S."/>
            <person name="Sealy I."/>
            <person name="Caccamo M."/>
            <person name="Churcher C."/>
            <person name="Scott C."/>
            <person name="Barrett J.C."/>
            <person name="Koch R."/>
            <person name="Rauch G.J."/>
            <person name="White S."/>
            <person name="Chow W."/>
            <person name="Kilian B."/>
            <person name="Quintais L.T."/>
            <person name="Guerra-Assuncao J.A."/>
            <person name="Zhou Y."/>
            <person name="Gu Y."/>
            <person name="Yen J."/>
            <person name="Vogel J.H."/>
            <person name="Eyre T."/>
            <person name="Redmond S."/>
            <person name="Banerjee R."/>
            <person name="Chi J."/>
            <person name="Fu B."/>
            <person name="Langley E."/>
            <person name="Maguire S.F."/>
            <person name="Laird G.K."/>
            <person name="Lloyd D."/>
            <person name="Kenyon E."/>
            <person name="Donaldson S."/>
            <person name="Sehra H."/>
            <person name="Almeida-King J."/>
            <person name="Loveland J."/>
            <person name="Trevanion S."/>
            <person name="Jones M."/>
            <person name="Quail M."/>
            <person name="Willey D."/>
            <person name="Hunt A."/>
            <person name="Burton J."/>
            <person name="Sims S."/>
            <person name="McLay K."/>
            <person name="Plumb B."/>
            <person name="Davis J."/>
            <person name="Clee C."/>
            <person name="Oliver K."/>
            <person name="Clark R."/>
            <person name="Riddle C."/>
            <person name="Elliot D."/>
            <person name="Threadgold G."/>
            <person name="Harden G."/>
            <person name="Ware D."/>
            <person name="Begum S."/>
            <person name="Mortimore B."/>
            <person name="Kerry G."/>
            <person name="Heath P."/>
            <person name="Phillimore B."/>
            <person name="Tracey A."/>
            <person name="Corby N."/>
            <person name="Dunn M."/>
            <person name="Johnson C."/>
            <person name="Wood J."/>
            <person name="Clark S."/>
            <person name="Pelan S."/>
            <person name="Griffiths G."/>
            <person name="Smith M."/>
            <person name="Glithero R."/>
            <person name="Howden P."/>
            <person name="Barker N."/>
            <person name="Lloyd C."/>
            <person name="Stevens C."/>
            <person name="Harley J."/>
            <person name="Holt K."/>
            <person name="Panagiotidis G."/>
            <person name="Lovell J."/>
            <person name="Beasley H."/>
            <person name="Henderson C."/>
            <person name="Gordon D."/>
            <person name="Auger K."/>
            <person name="Wright D."/>
            <person name="Collins J."/>
            <person name="Raisen C."/>
            <person name="Dyer L."/>
            <person name="Leung K."/>
            <person name="Robertson L."/>
            <person name="Ambridge K."/>
            <person name="Leongamornlert D."/>
            <person name="McGuire S."/>
            <person name="Gilderthorp R."/>
            <person name="Griffiths C."/>
            <person name="Manthravadi D."/>
            <person name="Nichol S."/>
            <person name="Barker G."/>
            <person name="Whitehead S."/>
            <person name="Kay M."/>
            <person name="Brown J."/>
            <person name="Murnane C."/>
            <person name="Gray E."/>
            <person name="Humphries M."/>
            <person name="Sycamore N."/>
            <person name="Barker D."/>
            <person name="Saunders D."/>
            <person name="Wallis J."/>
            <person name="Babbage A."/>
            <person name="Hammond S."/>
            <person name="Mashreghi-Mohammadi M."/>
            <person name="Barr L."/>
            <person name="Martin S."/>
            <person name="Wray P."/>
            <person name="Ellington A."/>
            <person name="Matthews N."/>
            <person name="Ellwood M."/>
            <person name="Woodmansey R."/>
            <person name="Clark G."/>
            <person name="Cooper J."/>
            <person name="Tromans A."/>
            <person name="Grafham D."/>
            <person name="Skuce C."/>
            <person name="Pandian R."/>
            <person name="Andrews R."/>
            <person name="Harrison E."/>
            <person name="Kimberley A."/>
            <person name="Garnett J."/>
            <person name="Fosker N."/>
            <person name="Hall R."/>
            <person name="Garner P."/>
            <person name="Kelly D."/>
            <person name="Bird C."/>
            <person name="Palmer S."/>
            <person name="Gehring I."/>
            <person name="Berger A."/>
            <person name="Dooley C.M."/>
            <person name="Ersan-Urun Z."/>
            <person name="Eser C."/>
            <person name="Geiger H."/>
            <person name="Geisler M."/>
            <person name="Karotki L."/>
            <person name="Kirn A."/>
            <person name="Konantz J."/>
            <person name="Konantz M."/>
            <person name="Oberlander M."/>
            <person name="Rudolph-Geiger S."/>
            <person name="Teucke M."/>
            <person name="Lanz C."/>
            <person name="Raddatz G."/>
            <person name="Osoegawa K."/>
            <person name="Zhu B."/>
            <person name="Rapp A."/>
            <person name="Widaa S."/>
            <person name="Langford C."/>
            <person name="Yang F."/>
            <person name="Schuster S.C."/>
            <person name="Carter N.P."/>
            <person name="Harrow J."/>
            <person name="Ning Z."/>
            <person name="Herrero J."/>
            <person name="Searle S.M."/>
            <person name="Enright A."/>
            <person name="Geisler R."/>
            <person name="Plasterk R.H."/>
            <person name="Lee C."/>
            <person name="Westerfield M."/>
            <person name="de Jong P.J."/>
            <person name="Zon L.I."/>
            <person name="Postlethwait J.H."/>
            <person name="Nusslein-Volhard C."/>
            <person name="Hubbard T.J."/>
            <person name="Roest Crollius H."/>
            <person name="Rogers J."/>
            <person name="Stemple D.L."/>
        </authorList>
    </citation>
    <scope>NUCLEOTIDE SEQUENCE [LARGE SCALE GENOMIC DNA]</scope>
    <source>
        <strain>Tuebingen</strain>
    </source>
</reference>
<reference key="2">
    <citation type="submission" date="2004-06" db="EMBL/GenBank/DDBJ databases">
        <authorList>
            <consortium name="NIH - Zebrafish Gene Collection (ZGC) project"/>
        </authorList>
    </citation>
    <scope>NUCLEOTIDE SEQUENCE [LARGE SCALE MRNA]</scope>
</reference>
<reference key="3">
    <citation type="journal article" date="2012" name="Nat. Genet.">
        <title>CEP41 is mutated in Joubert syndrome and is required for tubulin glutamylation at the cilium.</title>
        <authorList>
            <person name="Lee J.E."/>
            <person name="Silhavy J.L."/>
            <person name="Zaki M.S."/>
            <person name="Schroth J."/>
            <person name="Bielas S.L."/>
            <person name="Marsh S.E."/>
            <person name="Olvera J."/>
            <person name="Brancati F."/>
            <person name="Iannicelli M."/>
            <person name="Ikegami K."/>
            <person name="Schlossman A.M."/>
            <person name="Merriman B."/>
            <person name="Attie-Bitach T."/>
            <person name="Logan C.V."/>
            <person name="Glass I.A."/>
            <person name="Cluckey A."/>
            <person name="Louie C.M."/>
            <person name="Lee J.H."/>
            <person name="Raynes H.R."/>
            <person name="Rapin I."/>
            <person name="Castroviejo I.P."/>
            <person name="Setou M."/>
            <person name="Barbot C."/>
            <person name="Boltshauser E."/>
            <person name="Nelson S.F."/>
            <person name="Hildebrandt F."/>
            <person name="Johnson C.A."/>
            <person name="Doherty D.A."/>
            <person name="Valente E.M."/>
            <person name="Gleeson J.G."/>
        </authorList>
    </citation>
    <scope>FUNCTION</scope>
    <scope>DISRUPTION PHENOTYPE</scope>
    <scope>TISSUE SPECIFICITY</scope>
</reference>
<gene>
    <name type="primary">cep41</name>
    <name type="synonym">tsga14</name>
    <name type="ORF">zgc:91859</name>
</gene>
<name>CEP41_DANRE</name>
<protein>
    <recommendedName>
        <fullName>Centrosomal protein of 41 kDa</fullName>
        <shortName>Cep41</shortName>
    </recommendedName>
    <alternativeName>
        <fullName>Testis-specific gene A14 protein</fullName>
    </alternativeName>
</protein>
<feature type="chain" id="PRO_0000416267" description="Centrosomal protein of 41 kDa">
    <location>
        <begin position="1"/>
        <end position="374"/>
    </location>
</feature>
<feature type="domain" description="Rhodanese" evidence="2">
    <location>
        <begin position="176"/>
        <end position="273"/>
    </location>
</feature>
<feature type="region of interest" description="Disordered" evidence="3">
    <location>
        <begin position="279"/>
        <end position="301"/>
    </location>
</feature>
<feature type="region of interest" description="Disordered" evidence="3">
    <location>
        <begin position="329"/>
        <end position="374"/>
    </location>
</feature>
<feature type="compositionally biased region" description="Low complexity" evidence="3">
    <location>
        <begin position="329"/>
        <end position="349"/>
    </location>
</feature>